<organism>
    <name type="scientific">Archaeoglobus fulgidus (strain ATCC 49558 / DSM 4304 / JCM 9628 / NBRC 100126 / VC-16)</name>
    <dbReference type="NCBI Taxonomy" id="224325"/>
    <lineage>
        <taxon>Archaea</taxon>
        <taxon>Methanobacteriati</taxon>
        <taxon>Methanobacteriota</taxon>
        <taxon>Archaeoglobi</taxon>
        <taxon>Archaeoglobales</taxon>
        <taxon>Archaeoglobaceae</taxon>
        <taxon>Archaeoglobus</taxon>
    </lineage>
</organism>
<proteinExistence type="evidence at protein level"/>
<comment type="function">
    <text evidence="1">Structure-specific nuclease with 5'-flap endonuclease and 5'-3' exonuclease activities involved in DNA replication and repair. During DNA replication, cleaves the 5'-overhanging flap structure that is generated by displacement synthesis when DNA polymerase encounters the 5'-end of a downstream Okazaki fragment. Binds the unpaired 3'-DNA end and kinks the DNA to facilitate 5' cleavage specificity. Cleaves one nucleotide into the double-stranded DNA from the junction in flap DNA, leaving a nick for ligation. Also involved in the base excision repair (BER) pathway. Acts as a genome stabilization factor that prevents flaps from equilibrating into structures that lead to duplications and deletions. Also possesses 5'-3' exonuclease activity on nicked or gapped double-stranded DNA (By similarity).</text>
</comment>
<comment type="cofactor">
    <cofactor evidence="2">
        <name>Mg(2+)</name>
        <dbReference type="ChEBI" id="CHEBI:18420"/>
    </cofactor>
    <text evidence="2">Binds 2 magnesium ions per subunit. They probably participate in the reaction catalyzed by the enzyme. May bind an additional third magnesium ion after substrate binding.</text>
</comment>
<comment type="subunit">
    <text evidence="2 3">Interacts with PCNA. PCNA stimulates the nuclease activity without altering cleavage specificity.</text>
</comment>
<comment type="similarity">
    <text evidence="2">Belongs to the XPG/RAD2 endonuclease family. FEN1 subfamily.</text>
</comment>
<dbReference type="EC" id="3.1.-.-" evidence="2"/>
<dbReference type="EMBL" id="AE000782">
    <property type="protein sequence ID" value="AAB90967.1"/>
    <property type="molecule type" value="Genomic_DNA"/>
</dbReference>
<dbReference type="PIR" id="H69282">
    <property type="entry name" value="H69282"/>
</dbReference>
<dbReference type="RefSeq" id="WP_010877775.1">
    <property type="nucleotide sequence ID" value="NC_000917.1"/>
</dbReference>
<dbReference type="PDB" id="1RXV">
    <property type="method" value="X-ray"/>
    <property type="resolution" value="2.50 A"/>
    <property type="chains" value="A/B=1-336"/>
</dbReference>
<dbReference type="PDB" id="1RXW">
    <property type="method" value="X-ray"/>
    <property type="resolution" value="2.00 A"/>
    <property type="chains" value="A=1-336"/>
</dbReference>
<dbReference type="PDB" id="1RXZ">
    <property type="method" value="X-ray"/>
    <property type="resolution" value="2.00 A"/>
    <property type="chains" value="B=326-336"/>
</dbReference>
<dbReference type="PDBsum" id="1RXV"/>
<dbReference type="PDBsum" id="1RXW"/>
<dbReference type="PDBsum" id="1RXZ"/>
<dbReference type="SMR" id="O29975"/>
<dbReference type="STRING" id="224325.AF_0264"/>
<dbReference type="PaxDb" id="224325-AF_0264"/>
<dbReference type="EnsemblBacteria" id="AAB90967">
    <property type="protein sequence ID" value="AAB90967"/>
    <property type="gene ID" value="AF_0264"/>
</dbReference>
<dbReference type="GeneID" id="24793800"/>
<dbReference type="KEGG" id="afu:AF_0264"/>
<dbReference type="eggNOG" id="arCOG04050">
    <property type="taxonomic scope" value="Archaea"/>
</dbReference>
<dbReference type="HOGENOM" id="CLU_032444_0_0_2"/>
<dbReference type="OrthoDB" id="9593at2157"/>
<dbReference type="PhylomeDB" id="O29975"/>
<dbReference type="BRENDA" id="3.1.99.B1">
    <property type="organism ID" value="414"/>
</dbReference>
<dbReference type="EvolutionaryTrace" id="O29975"/>
<dbReference type="Proteomes" id="UP000002199">
    <property type="component" value="Chromosome"/>
</dbReference>
<dbReference type="GO" id="GO:0008409">
    <property type="term" value="F:5'-3' exonuclease activity"/>
    <property type="evidence" value="ECO:0007669"/>
    <property type="project" value="UniProtKB-UniRule"/>
</dbReference>
<dbReference type="GO" id="GO:0017108">
    <property type="term" value="F:5'-flap endonuclease activity"/>
    <property type="evidence" value="ECO:0007669"/>
    <property type="project" value="UniProtKB-UniRule"/>
</dbReference>
<dbReference type="GO" id="GO:0003677">
    <property type="term" value="F:DNA binding"/>
    <property type="evidence" value="ECO:0007669"/>
    <property type="project" value="UniProtKB-UniRule"/>
</dbReference>
<dbReference type="GO" id="GO:0000287">
    <property type="term" value="F:magnesium ion binding"/>
    <property type="evidence" value="ECO:0007669"/>
    <property type="project" value="UniProtKB-UniRule"/>
</dbReference>
<dbReference type="GO" id="GO:0006281">
    <property type="term" value="P:DNA repair"/>
    <property type="evidence" value="ECO:0007669"/>
    <property type="project" value="UniProtKB-UniRule"/>
</dbReference>
<dbReference type="GO" id="GO:0043137">
    <property type="term" value="P:DNA replication, removal of RNA primer"/>
    <property type="evidence" value="ECO:0007669"/>
    <property type="project" value="UniProtKB-UniRule"/>
</dbReference>
<dbReference type="CDD" id="cd09903">
    <property type="entry name" value="H3TH_FEN1-Arc"/>
    <property type="match status" value="1"/>
</dbReference>
<dbReference type="CDD" id="cd09867">
    <property type="entry name" value="PIN_FEN1"/>
    <property type="match status" value="1"/>
</dbReference>
<dbReference type="FunFam" id="1.10.150.20:FF:000087">
    <property type="entry name" value="Flap endonuclease 1"/>
    <property type="match status" value="1"/>
</dbReference>
<dbReference type="FunFam" id="3.40.50.1010:FF:000016">
    <property type="entry name" value="Flap endonuclease 1"/>
    <property type="match status" value="1"/>
</dbReference>
<dbReference type="Gene3D" id="1.10.150.20">
    <property type="entry name" value="5' to 3' exonuclease, C-terminal subdomain"/>
    <property type="match status" value="1"/>
</dbReference>
<dbReference type="Gene3D" id="3.40.50.1010">
    <property type="entry name" value="5'-nuclease"/>
    <property type="match status" value="1"/>
</dbReference>
<dbReference type="HAMAP" id="MF_00614">
    <property type="entry name" value="Fen"/>
    <property type="match status" value="1"/>
</dbReference>
<dbReference type="InterPro" id="IPR002421">
    <property type="entry name" value="5-3_exonuclease"/>
</dbReference>
<dbReference type="InterPro" id="IPR036279">
    <property type="entry name" value="5-3_exonuclease_C_sf"/>
</dbReference>
<dbReference type="InterPro" id="IPR023426">
    <property type="entry name" value="Flap_endonuc"/>
</dbReference>
<dbReference type="InterPro" id="IPR019973">
    <property type="entry name" value="Flap_endonuc_arc"/>
</dbReference>
<dbReference type="InterPro" id="IPR008918">
    <property type="entry name" value="HhH2"/>
</dbReference>
<dbReference type="InterPro" id="IPR029060">
    <property type="entry name" value="PIN-like_dom_sf"/>
</dbReference>
<dbReference type="InterPro" id="IPR006086">
    <property type="entry name" value="XPG-I_dom"/>
</dbReference>
<dbReference type="InterPro" id="IPR006084">
    <property type="entry name" value="XPG/Rad2"/>
</dbReference>
<dbReference type="InterPro" id="IPR019974">
    <property type="entry name" value="XPG_CS"/>
</dbReference>
<dbReference type="InterPro" id="IPR006085">
    <property type="entry name" value="XPG_DNA_repair_N"/>
</dbReference>
<dbReference type="NCBIfam" id="TIGR03674">
    <property type="entry name" value="fen_arch"/>
    <property type="match status" value="1"/>
</dbReference>
<dbReference type="PANTHER" id="PTHR11081:SF9">
    <property type="entry name" value="FLAP ENDONUCLEASE 1"/>
    <property type="match status" value="1"/>
</dbReference>
<dbReference type="PANTHER" id="PTHR11081">
    <property type="entry name" value="FLAP ENDONUCLEASE FAMILY MEMBER"/>
    <property type="match status" value="1"/>
</dbReference>
<dbReference type="Pfam" id="PF00867">
    <property type="entry name" value="XPG_I"/>
    <property type="match status" value="1"/>
</dbReference>
<dbReference type="Pfam" id="PF00752">
    <property type="entry name" value="XPG_N"/>
    <property type="match status" value="1"/>
</dbReference>
<dbReference type="PRINTS" id="PR00853">
    <property type="entry name" value="XPGRADSUPER"/>
</dbReference>
<dbReference type="SMART" id="SM00475">
    <property type="entry name" value="53EXOc"/>
    <property type="match status" value="1"/>
</dbReference>
<dbReference type="SMART" id="SM00279">
    <property type="entry name" value="HhH2"/>
    <property type="match status" value="1"/>
</dbReference>
<dbReference type="SMART" id="SM00484">
    <property type="entry name" value="XPGI"/>
    <property type="match status" value="1"/>
</dbReference>
<dbReference type="SMART" id="SM00485">
    <property type="entry name" value="XPGN"/>
    <property type="match status" value="1"/>
</dbReference>
<dbReference type="SUPFAM" id="SSF47807">
    <property type="entry name" value="5' to 3' exonuclease, C-terminal subdomain"/>
    <property type="match status" value="1"/>
</dbReference>
<dbReference type="SUPFAM" id="SSF88723">
    <property type="entry name" value="PIN domain-like"/>
    <property type="match status" value="1"/>
</dbReference>
<dbReference type="PROSITE" id="PS00841">
    <property type="entry name" value="XPG_1"/>
    <property type="match status" value="1"/>
</dbReference>
<protein>
    <recommendedName>
        <fullName evidence="2">Flap endonuclease 1</fullName>
        <shortName evidence="2">FEN-1</shortName>
        <ecNumber evidence="2">3.1.-.-</ecNumber>
    </recommendedName>
    <alternativeName>
        <fullName evidence="2">Flap structure-specific endonuclease 1</fullName>
    </alternativeName>
</protein>
<reference key="1">
    <citation type="journal article" date="1997" name="Nature">
        <title>The complete genome sequence of the hyperthermophilic, sulphate-reducing archaeon Archaeoglobus fulgidus.</title>
        <authorList>
            <person name="Klenk H.-P."/>
            <person name="Clayton R.A."/>
            <person name="Tomb J.-F."/>
            <person name="White O."/>
            <person name="Nelson K.E."/>
            <person name="Ketchum K.A."/>
            <person name="Dodson R.J."/>
            <person name="Gwinn M.L."/>
            <person name="Hickey E.K."/>
            <person name="Peterson J.D."/>
            <person name="Richardson D.L."/>
            <person name="Kerlavage A.R."/>
            <person name="Graham D.E."/>
            <person name="Kyrpides N.C."/>
            <person name="Fleischmann R.D."/>
            <person name="Quackenbush J."/>
            <person name="Lee N.H."/>
            <person name="Sutton G.G."/>
            <person name="Gill S.R."/>
            <person name="Kirkness E.F."/>
            <person name="Dougherty B.A."/>
            <person name="McKenney K."/>
            <person name="Adams M.D."/>
            <person name="Loftus B.J."/>
            <person name="Peterson S.N."/>
            <person name="Reich C.I."/>
            <person name="McNeil L.K."/>
            <person name="Badger J.H."/>
            <person name="Glodek A."/>
            <person name="Zhou L."/>
            <person name="Overbeek R."/>
            <person name="Gocayne J.D."/>
            <person name="Weidman J.F."/>
            <person name="McDonald L.A."/>
            <person name="Utterback T.R."/>
            <person name="Cotton M.D."/>
            <person name="Spriggs T."/>
            <person name="Artiach P."/>
            <person name="Kaine B.P."/>
            <person name="Sykes S.M."/>
            <person name="Sadow P.W."/>
            <person name="D'Andrea K.P."/>
            <person name="Bowman C."/>
            <person name="Fujii C."/>
            <person name="Garland S.A."/>
            <person name="Mason T.M."/>
            <person name="Olsen G.J."/>
            <person name="Fraser C.M."/>
            <person name="Smith H.O."/>
            <person name="Woese C.R."/>
            <person name="Venter J.C."/>
        </authorList>
    </citation>
    <scope>NUCLEOTIDE SEQUENCE [LARGE SCALE GENOMIC DNA]</scope>
    <source>
        <strain>ATCC 49558 / DSM 4304 / JCM 9628 / NBRC 100126 / VC-16</strain>
    </source>
</reference>
<reference key="2">
    <citation type="journal article" date="2004" name="Cell">
        <title>Structural basis for FEN-1 substrate specificity and PCNA-mediated activation in DNA replication and repair.</title>
        <authorList>
            <person name="Chapados B.R."/>
            <person name="Hosfield D.J."/>
            <person name="Han S."/>
            <person name="Qiu J."/>
            <person name="Yelent B."/>
            <person name="Shen B."/>
            <person name="Tainer J.A."/>
        </authorList>
    </citation>
    <scope>X-RAY CRYSTALLOGRAPHY (2.0 ANGSTROMS) IN COMPLEX WITH DNA AND PCNA</scope>
</reference>
<name>FEN_ARCFU</name>
<evidence type="ECO:0000250" key="1"/>
<evidence type="ECO:0000255" key="2">
    <source>
        <dbReference type="HAMAP-Rule" id="MF_00614"/>
    </source>
</evidence>
<evidence type="ECO:0000269" key="3">
    <source>
    </source>
</evidence>
<evidence type="ECO:0007829" key="4">
    <source>
        <dbReference type="PDB" id="1RXW"/>
    </source>
</evidence>
<evidence type="ECO:0007829" key="5">
    <source>
        <dbReference type="PDB" id="1RXZ"/>
    </source>
</evidence>
<accession>O29975</accession>
<keyword id="KW-0002">3D-structure</keyword>
<keyword id="KW-0227">DNA damage</keyword>
<keyword id="KW-0234">DNA repair</keyword>
<keyword id="KW-0235">DNA replication</keyword>
<keyword id="KW-0255">Endonuclease</keyword>
<keyword id="KW-0269">Exonuclease</keyword>
<keyword id="KW-0378">Hydrolase</keyword>
<keyword id="KW-0460">Magnesium</keyword>
<keyword id="KW-0479">Metal-binding</keyword>
<keyword id="KW-0540">Nuclease</keyword>
<keyword id="KW-1185">Reference proteome</keyword>
<gene>
    <name evidence="2" type="primary">fen</name>
    <name type="ordered locus">AF_0264</name>
</gene>
<sequence length="336" mass="38065">MGADIGDLFEREEVELEYFSGKKIAVDAFNTLYQFISIIRQPDGTPLKDSQGRITSHLSGILYRVSNMVEVGIRPVFVFDGEPPEFKKAEIEERKKRRAEAEEMWIAALQAGDKDAKKYAQAAGRVDEYIVDSAKTLLSYMGIPFVDAPSEGEAQAAYMAAKGDVEYTGSQDYDSLLFGSPRLARNLAITGKRKLPGKNVYVDVKPEIIILESNLKRLGLTREQLIDIAILVGTDYNEGVKGVGVKKALNYIKTYGDIFRALKALKVNIDHVEEIRNFFLNPPVTDDYRIEFREPDFEKAIEFLCEEHDFSRERVEKALEKLKALKSTQATLERWF</sequence>
<feature type="chain" id="PRO_0000154050" description="Flap endonuclease 1">
    <location>
        <begin position="1"/>
        <end position="336"/>
    </location>
</feature>
<feature type="region of interest" description="N-domain">
    <location>
        <begin position="1"/>
        <end position="98"/>
    </location>
</feature>
<feature type="region of interest" description="I-domain">
    <location>
        <begin position="115"/>
        <end position="256"/>
    </location>
</feature>
<feature type="region of interest" description="Interaction with PCNA">
    <location>
        <begin position="328"/>
        <end position="336"/>
    </location>
</feature>
<feature type="binding site" evidence="2">
    <location>
        <position position="27"/>
    </location>
    <ligand>
        <name>Mg(2+)</name>
        <dbReference type="ChEBI" id="CHEBI:18420"/>
        <label>1</label>
    </ligand>
</feature>
<feature type="binding site" evidence="2">
    <location>
        <position position="80"/>
    </location>
    <ligand>
        <name>Mg(2+)</name>
        <dbReference type="ChEBI" id="CHEBI:18420"/>
        <label>1</label>
    </ligand>
</feature>
<feature type="binding site" evidence="2">
    <location>
        <position position="151"/>
    </location>
    <ligand>
        <name>Mg(2+)</name>
        <dbReference type="ChEBI" id="CHEBI:18420"/>
        <label>1</label>
    </ligand>
</feature>
<feature type="binding site" evidence="2">
    <location>
        <position position="153"/>
    </location>
    <ligand>
        <name>Mg(2+)</name>
        <dbReference type="ChEBI" id="CHEBI:18420"/>
        <label>1</label>
    </ligand>
</feature>
<feature type="binding site" evidence="2">
    <location>
        <position position="172"/>
    </location>
    <ligand>
        <name>Mg(2+)</name>
        <dbReference type="ChEBI" id="CHEBI:18420"/>
        <label>2</label>
    </ligand>
</feature>
<feature type="binding site" evidence="2">
    <location>
        <position position="174"/>
    </location>
    <ligand>
        <name>Mg(2+)</name>
        <dbReference type="ChEBI" id="CHEBI:18420"/>
        <label>2</label>
    </ligand>
</feature>
<feature type="binding site" evidence="2">
    <location>
        <position position="235"/>
    </location>
    <ligand>
        <name>Mg(2+)</name>
        <dbReference type="ChEBI" id="CHEBI:18420"/>
        <label>2</label>
    </ligand>
</feature>
<feature type="helix" evidence="4">
    <location>
        <begin position="5"/>
        <end position="8"/>
    </location>
</feature>
<feature type="helix" evidence="4">
    <location>
        <begin position="16"/>
        <end position="19"/>
    </location>
</feature>
<feature type="strand" evidence="4">
    <location>
        <begin position="23"/>
        <end position="27"/>
    </location>
</feature>
<feature type="helix" evidence="4">
    <location>
        <begin position="28"/>
        <end position="38"/>
    </location>
</feature>
<feature type="helix" evidence="4">
    <location>
        <begin position="56"/>
        <end position="71"/>
    </location>
</feature>
<feature type="strand" evidence="4">
    <location>
        <begin position="74"/>
        <end position="79"/>
    </location>
</feature>
<feature type="helix" evidence="4">
    <location>
        <begin position="85"/>
        <end position="87"/>
    </location>
</feature>
<feature type="helix" evidence="4">
    <location>
        <begin position="88"/>
        <end position="111"/>
    </location>
</feature>
<feature type="helix" evidence="4">
    <location>
        <begin position="116"/>
        <end position="123"/>
    </location>
</feature>
<feature type="helix" evidence="4">
    <location>
        <begin position="128"/>
        <end position="140"/>
    </location>
</feature>
<feature type="strand" evidence="4">
    <location>
        <begin position="145"/>
        <end position="147"/>
    </location>
</feature>
<feature type="helix" evidence="4">
    <location>
        <begin position="152"/>
        <end position="161"/>
    </location>
</feature>
<feature type="strand" evidence="4">
    <location>
        <begin position="164"/>
        <end position="169"/>
    </location>
</feature>
<feature type="strand" evidence="4">
    <location>
        <begin position="171"/>
        <end position="173"/>
    </location>
</feature>
<feature type="helix" evidence="4">
    <location>
        <begin position="174"/>
        <end position="177"/>
    </location>
</feature>
<feature type="strand" evidence="4">
    <location>
        <begin position="181"/>
        <end position="186"/>
    </location>
</feature>
<feature type="strand" evidence="4">
    <location>
        <begin position="207"/>
        <end position="210"/>
    </location>
</feature>
<feature type="helix" evidence="4">
    <location>
        <begin position="211"/>
        <end position="218"/>
    </location>
</feature>
<feature type="helix" evidence="4">
    <location>
        <begin position="222"/>
        <end position="232"/>
    </location>
</feature>
<feature type="helix" evidence="4">
    <location>
        <begin position="245"/>
        <end position="255"/>
    </location>
</feature>
<feature type="helix" evidence="4">
    <location>
        <begin position="258"/>
        <end position="265"/>
    </location>
</feature>
<feature type="helix" evidence="4">
    <location>
        <begin position="273"/>
        <end position="280"/>
    </location>
</feature>
<feature type="helix" evidence="4">
    <location>
        <begin position="297"/>
        <end position="304"/>
    </location>
</feature>
<feature type="turn" evidence="4">
    <location>
        <begin position="305"/>
        <end position="308"/>
    </location>
</feature>
<feature type="helix" evidence="4">
    <location>
        <begin position="312"/>
        <end position="319"/>
    </location>
</feature>
<feature type="helix" evidence="4">
    <location>
        <begin position="320"/>
        <end position="322"/>
    </location>
</feature>
<feature type="strand" evidence="5">
    <location>
        <begin position="327"/>
        <end position="329"/>
    </location>
</feature>
<feature type="helix" evidence="5">
    <location>
        <begin position="332"/>
        <end position="334"/>
    </location>
</feature>